<comment type="function">
    <text>Interacts with outer membrane receptor proteins that carry out high-affinity binding and energy dependent uptake into the periplasmic space of specific substrates. It could act to transduce energy from the cytoplasmic membrane to specific energy-requiring processes in the outer membrane, resulting in the release into the periplasm of ligands bound by these outer membrane proteins. Required for heme utilization and virulence.</text>
</comment>
<comment type="subunit">
    <text evidence="1">The accessory proteins ExbB and ExbD seem to form a complex with TonB.</text>
</comment>
<comment type="subcellular location">
    <subcellularLocation>
        <location evidence="1">Cell inner membrane</location>
        <topology evidence="1">Single-pass membrane protein</topology>
        <orientation evidence="1">Periplasmic side</orientation>
    </subcellularLocation>
</comment>
<comment type="similarity">
    <text evidence="5">Belongs to the TonB family.</text>
</comment>
<organism>
    <name type="scientific">Neisseria meningitidis serogroup C</name>
    <dbReference type="NCBI Taxonomy" id="135720"/>
    <lineage>
        <taxon>Bacteria</taxon>
        <taxon>Pseudomonadati</taxon>
        <taxon>Pseudomonadota</taxon>
        <taxon>Betaproteobacteria</taxon>
        <taxon>Neisseriales</taxon>
        <taxon>Neisseriaceae</taxon>
        <taxon>Neisseria</taxon>
    </lineage>
</organism>
<dbReference type="EMBL" id="U77738">
    <property type="protein sequence ID" value="AAC44834.1"/>
    <property type="molecule type" value="Genomic_DNA"/>
</dbReference>
<dbReference type="SMR" id="P95374"/>
<dbReference type="GO" id="GO:0098797">
    <property type="term" value="C:plasma membrane protein complex"/>
    <property type="evidence" value="ECO:0007669"/>
    <property type="project" value="TreeGrafter"/>
</dbReference>
<dbReference type="GO" id="GO:0031992">
    <property type="term" value="F:energy transducer activity"/>
    <property type="evidence" value="ECO:0007669"/>
    <property type="project" value="TreeGrafter"/>
</dbReference>
<dbReference type="GO" id="GO:0015031">
    <property type="term" value="P:protein transport"/>
    <property type="evidence" value="ECO:0007669"/>
    <property type="project" value="UniProtKB-KW"/>
</dbReference>
<dbReference type="GO" id="GO:0055085">
    <property type="term" value="P:transmembrane transport"/>
    <property type="evidence" value="ECO:0007669"/>
    <property type="project" value="InterPro"/>
</dbReference>
<dbReference type="FunFam" id="3.30.1150.10:FF:000009">
    <property type="entry name" value="Protein TonB"/>
    <property type="match status" value="1"/>
</dbReference>
<dbReference type="Gene3D" id="3.30.1150.10">
    <property type="match status" value="1"/>
</dbReference>
<dbReference type="InterPro" id="IPR051045">
    <property type="entry name" value="TonB-dependent_transducer"/>
</dbReference>
<dbReference type="InterPro" id="IPR006260">
    <property type="entry name" value="TonB/TolA_C"/>
</dbReference>
<dbReference type="InterPro" id="IPR037682">
    <property type="entry name" value="TonB_C"/>
</dbReference>
<dbReference type="NCBIfam" id="TIGR01352">
    <property type="entry name" value="tonB_Cterm"/>
    <property type="match status" value="1"/>
</dbReference>
<dbReference type="PANTHER" id="PTHR33446:SF2">
    <property type="entry name" value="PROTEIN TONB"/>
    <property type="match status" value="1"/>
</dbReference>
<dbReference type="PANTHER" id="PTHR33446">
    <property type="entry name" value="PROTEIN TONB-RELATED"/>
    <property type="match status" value="1"/>
</dbReference>
<dbReference type="Pfam" id="PF03544">
    <property type="entry name" value="TonB_C"/>
    <property type="match status" value="1"/>
</dbReference>
<dbReference type="SUPFAM" id="SSF74653">
    <property type="entry name" value="TolA/TonB C-terminal domain"/>
    <property type="match status" value="1"/>
</dbReference>
<dbReference type="PROSITE" id="PS52015">
    <property type="entry name" value="TONB_CTD"/>
    <property type="match status" value="1"/>
</dbReference>
<accession>P95374</accession>
<gene>
    <name type="primary">tonB</name>
</gene>
<feature type="chain" id="PRO_0000196204" description="Protein TonB">
    <location>
        <begin position="1"/>
        <end position="278"/>
    </location>
</feature>
<feature type="topological domain" description="Cytoplasmic" evidence="2">
    <location>
        <begin position="1"/>
        <end position="5"/>
    </location>
</feature>
<feature type="transmembrane region" description="Helical; Signal-anchor" evidence="2">
    <location>
        <begin position="6"/>
        <end position="27"/>
    </location>
</feature>
<feature type="topological domain" description="Periplasmic" evidence="2">
    <location>
        <begin position="28"/>
        <end position="278"/>
    </location>
</feature>
<feature type="domain" description="TonB C-terminal" evidence="3">
    <location>
        <begin position="194"/>
        <end position="278"/>
    </location>
</feature>
<feature type="region of interest" description="Disordered" evidence="4">
    <location>
        <begin position="51"/>
        <end position="203"/>
    </location>
</feature>
<feature type="compositionally biased region" description="Pro residues" evidence="4">
    <location>
        <begin position="64"/>
        <end position="83"/>
    </location>
</feature>
<feature type="compositionally biased region" description="Basic residues" evidence="4">
    <location>
        <begin position="87"/>
        <end position="135"/>
    </location>
</feature>
<evidence type="ECO:0000250" key="1"/>
<evidence type="ECO:0000255" key="2"/>
<evidence type="ECO:0000255" key="3">
    <source>
        <dbReference type="PROSITE-ProRule" id="PRU01359"/>
    </source>
</evidence>
<evidence type="ECO:0000256" key="4">
    <source>
        <dbReference type="SAM" id="MobiDB-lite"/>
    </source>
</evidence>
<evidence type="ECO:0000305" key="5"/>
<reference key="1">
    <citation type="journal article" date="1997" name="J. Bacteriol.">
        <title>Neisseria meningitidis tonB, exbB, and exbD genes: Ton-dependent utilization of protein-bound iron in Neisseriae.</title>
        <authorList>
            <person name="Stojiljkovic I."/>
            <person name="Srinivasan N."/>
        </authorList>
    </citation>
    <scope>NUCLEOTIDE SEQUENCE [GENOMIC DNA]</scope>
    <source>
        <strain>8013.6 / Serogroup C</strain>
    </source>
</reference>
<protein>
    <recommendedName>
        <fullName>Protein TonB</fullName>
    </recommendedName>
</protein>
<sequence length="278" mass="29942">MDKERILTPAVVFSVALLHLAMVALLWQAHKLPVIESGNVIEFVDLGDFGGGDGAPEGAGAPAAPEPQPEPEPPKPVEPPKPVLKPVLRKRRMRIFSSLRKSRNLKKSRNPKKNRNQSLSRKRSLSRNRRKNRSRKPSEKPAEHPSNASAKADSEQGNGEETGTKRDGTGRGEAAVNVSVGVKGEHGEGAGSSKGNPLRANGSIPRPAYPTLSMENDEQGTVVLSVLVSPGGHVESVKIVKSSGFSRLDNAARKAAQNGHFQANAWTEFKVPVKFELN</sequence>
<name>TONB_NEIMC</name>
<keyword id="KW-0997">Cell inner membrane</keyword>
<keyword id="KW-1003">Cell membrane</keyword>
<keyword id="KW-0472">Membrane</keyword>
<keyword id="KW-0653">Protein transport</keyword>
<keyword id="KW-0735">Signal-anchor</keyword>
<keyword id="KW-0812">Transmembrane</keyword>
<keyword id="KW-1133">Transmembrane helix</keyword>
<keyword id="KW-0813">Transport</keyword>
<keyword id="KW-0843">Virulence</keyword>
<proteinExistence type="inferred from homology"/>